<evidence type="ECO:0000255" key="1">
    <source>
        <dbReference type="HAMAP-Rule" id="MF_00006"/>
    </source>
</evidence>
<name>ARLY_BURO1</name>
<keyword id="KW-0028">Amino-acid biosynthesis</keyword>
<keyword id="KW-0055">Arginine biosynthesis</keyword>
<keyword id="KW-0963">Cytoplasm</keyword>
<keyword id="KW-0456">Lyase</keyword>
<reference key="1">
    <citation type="submission" date="2006-05" db="EMBL/GenBank/DDBJ databases">
        <title>Complete sequence of chromosome 1 of Burkholderia cenocepacia AU 1054.</title>
        <authorList>
            <consortium name="US DOE Joint Genome Institute"/>
            <person name="Copeland A."/>
            <person name="Lucas S."/>
            <person name="Lapidus A."/>
            <person name="Barry K."/>
            <person name="Detter J.C."/>
            <person name="Glavina del Rio T."/>
            <person name="Hammon N."/>
            <person name="Israni S."/>
            <person name="Dalin E."/>
            <person name="Tice H."/>
            <person name="Pitluck S."/>
            <person name="Chain P."/>
            <person name="Malfatti S."/>
            <person name="Shin M."/>
            <person name="Vergez L."/>
            <person name="Schmutz J."/>
            <person name="Larimer F."/>
            <person name="Land M."/>
            <person name="Hauser L."/>
            <person name="Kyrpides N."/>
            <person name="Lykidis A."/>
            <person name="LiPuma J.J."/>
            <person name="Konstantinidis K."/>
            <person name="Tiedje J.M."/>
            <person name="Richardson P."/>
        </authorList>
    </citation>
    <scope>NUCLEOTIDE SEQUENCE [LARGE SCALE GENOMIC DNA]</scope>
    <source>
        <strain>AU 1054</strain>
    </source>
</reference>
<sequence>MTSQLHKKGEAWSARFSEPMSELVKRYTSSVFFDKRLALVDIAGSLAHANMLAAQKIINADDLAAIERGMAQIKGEIERGEFEWQLDLEDVHLNIEARLTALIGDAGKRLHTGRSRNDQVATDIRLWLRGEIDRIGGLLNDLRGALIDLAEQNADTIMPGFTHLQVAQPVTFGHHLLAYVEMFTRDAERMRDCRTRVNRLPLGAAALAGTSYPIDRHAVAKTLGFDGICANSLDAVSDRDFAIEFTAASALVMTHVSRFSEELVLWMSPRVGFIDIADRFCTGSSIMPQKKNPDVPELARGKTGRVNGHLMALLTLMKGQPLAYNKDNQEDKEPLFDTVDTVADTLRIFAEMVAGITVKPDAMRAAALQGFSTATDLADYLVKRGLPFRDAHEAVAHAVKICDDRGIDLADLTLDEMKQELPNVAHLIGDDVFGYLTLEGSVASRNHPGGTSPDQVRAAVKAARAALAK</sequence>
<feature type="chain" id="PRO_1000000456" description="Argininosuccinate lyase">
    <location>
        <begin position="1"/>
        <end position="469"/>
    </location>
</feature>
<protein>
    <recommendedName>
        <fullName evidence="1">Argininosuccinate lyase</fullName>
        <shortName evidence="1">ASAL</shortName>
        <ecNumber evidence="1">4.3.2.1</ecNumber>
    </recommendedName>
    <alternativeName>
        <fullName evidence="1">Arginosuccinase</fullName>
    </alternativeName>
</protein>
<comment type="catalytic activity">
    <reaction evidence="1">
        <text>2-(N(omega)-L-arginino)succinate = fumarate + L-arginine</text>
        <dbReference type="Rhea" id="RHEA:24020"/>
        <dbReference type="ChEBI" id="CHEBI:29806"/>
        <dbReference type="ChEBI" id="CHEBI:32682"/>
        <dbReference type="ChEBI" id="CHEBI:57472"/>
        <dbReference type="EC" id="4.3.2.1"/>
    </reaction>
</comment>
<comment type="pathway">
    <text evidence="1">Amino-acid biosynthesis; L-arginine biosynthesis; L-arginine from L-ornithine and carbamoyl phosphate: step 3/3.</text>
</comment>
<comment type="subcellular location">
    <subcellularLocation>
        <location evidence="1">Cytoplasm</location>
    </subcellularLocation>
</comment>
<comment type="similarity">
    <text evidence="1">Belongs to the lyase 1 family. Argininosuccinate lyase subfamily.</text>
</comment>
<proteinExistence type="inferred from homology"/>
<organism>
    <name type="scientific">Burkholderia orbicola (strain AU 1054)</name>
    <dbReference type="NCBI Taxonomy" id="331271"/>
    <lineage>
        <taxon>Bacteria</taxon>
        <taxon>Pseudomonadati</taxon>
        <taxon>Pseudomonadota</taxon>
        <taxon>Betaproteobacteria</taxon>
        <taxon>Burkholderiales</taxon>
        <taxon>Burkholderiaceae</taxon>
        <taxon>Burkholderia</taxon>
        <taxon>Burkholderia cepacia complex</taxon>
        <taxon>Burkholderia orbicola</taxon>
    </lineage>
</organism>
<gene>
    <name evidence="1" type="primary">argH</name>
    <name type="ordered locus">Bcen_1818</name>
</gene>
<accession>Q1BUI4</accession>
<dbReference type="EC" id="4.3.2.1" evidence="1"/>
<dbReference type="EMBL" id="CP000378">
    <property type="protein sequence ID" value="ABF76721.1"/>
    <property type="molecule type" value="Genomic_DNA"/>
</dbReference>
<dbReference type="SMR" id="Q1BUI4"/>
<dbReference type="HOGENOM" id="CLU_027272_2_3_4"/>
<dbReference type="UniPathway" id="UPA00068">
    <property type="reaction ID" value="UER00114"/>
</dbReference>
<dbReference type="GO" id="GO:0005829">
    <property type="term" value="C:cytosol"/>
    <property type="evidence" value="ECO:0007669"/>
    <property type="project" value="TreeGrafter"/>
</dbReference>
<dbReference type="GO" id="GO:0004056">
    <property type="term" value="F:argininosuccinate lyase activity"/>
    <property type="evidence" value="ECO:0007669"/>
    <property type="project" value="UniProtKB-UniRule"/>
</dbReference>
<dbReference type="GO" id="GO:0042450">
    <property type="term" value="P:arginine biosynthetic process via ornithine"/>
    <property type="evidence" value="ECO:0007669"/>
    <property type="project" value="InterPro"/>
</dbReference>
<dbReference type="GO" id="GO:0006526">
    <property type="term" value="P:L-arginine biosynthetic process"/>
    <property type="evidence" value="ECO:0007669"/>
    <property type="project" value="UniProtKB-UniRule"/>
</dbReference>
<dbReference type="CDD" id="cd01359">
    <property type="entry name" value="Argininosuccinate_lyase"/>
    <property type="match status" value="1"/>
</dbReference>
<dbReference type="FunFam" id="1.10.275.10:FF:000002">
    <property type="entry name" value="Argininosuccinate lyase"/>
    <property type="match status" value="1"/>
</dbReference>
<dbReference type="FunFam" id="1.10.40.30:FF:000001">
    <property type="entry name" value="Argininosuccinate lyase"/>
    <property type="match status" value="1"/>
</dbReference>
<dbReference type="FunFam" id="1.20.200.10:FF:000015">
    <property type="entry name" value="argininosuccinate lyase isoform X2"/>
    <property type="match status" value="1"/>
</dbReference>
<dbReference type="Gene3D" id="1.10.40.30">
    <property type="entry name" value="Fumarase/aspartase (C-terminal domain)"/>
    <property type="match status" value="1"/>
</dbReference>
<dbReference type="Gene3D" id="1.20.200.10">
    <property type="entry name" value="Fumarase/aspartase (Central domain)"/>
    <property type="match status" value="1"/>
</dbReference>
<dbReference type="Gene3D" id="1.10.275.10">
    <property type="entry name" value="Fumarase/aspartase (N-terminal domain)"/>
    <property type="match status" value="1"/>
</dbReference>
<dbReference type="HAMAP" id="MF_00006">
    <property type="entry name" value="Arg_succ_lyase"/>
    <property type="match status" value="1"/>
</dbReference>
<dbReference type="InterPro" id="IPR029419">
    <property type="entry name" value="Arg_succ_lyase_C"/>
</dbReference>
<dbReference type="InterPro" id="IPR009049">
    <property type="entry name" value="Argininosuccinate_lyase"/>
</dbReference>
<dbReference type="InterPro" id="IPR024083">
    <property type="entry name" value="Fumarase/histidase_N"/>
</dbReference>
<dbReference type="InterPro" id="IPR020557">
    <property type="entry name" value="Fumarate_lyase_CS"/>
</dbReference>
<dbReference type="InterPro" id="IPR000362">
    <property type="entry name" value="Fumarate_lyase_fam"/>
</dbReference>
<dbReference type="InterPro" id="IPR022761">
    <property type="entry name" value="Fumarate_lyase_N"/>
</dbReference>
<dbReference type="InterPro" id="IPR008948">
    <property type="entry name" value="L-Aspartase-like"/>
</dbReference>
<dbReference type="NCBIfam" id="TIGR00838">
    <property type="entry name" value="argH"/>
    <property type="match status" value="1"/>
</dbReference>
<dbReference type="PANTHER" id="PTHR43814">
    <property type="entry name" value="ARGININOSUCCINATE LYASE"/>
    <property type="match status" value="1"/>
</dbReference>
<dbReference type="PANTHER" id="PTHR43814:SF1">
    <property type="entry name" value="ARGININOSUCCINATE LYASE"/>
    <property type="match status" value="1"/>
</dbReference>
<dbReference type="Pfam" id="PF14698">
    <property type="entry name" value="ASL_C2"/>
    <property type="match status" value="1"/>
</dbReference>
<dbReference type="Pfam" id="PF00206">
    <property type="entry name" value="Lyase_1"/>
    <property type="match status" value="1"/>
</dbReference>
<dbReference type="PRINTS" id="PR00145">
    <property type="entry name" value="ARGSUCLYASE"/>
</dbReference>
<dbReference type="PRINTS" id="PR00149">
    <property type="entry name" value="FUMRATELYASE"/>
</dbReference>
<dbReference type="SUPFAM" id="SSF48557">
    <property type="entry name" value="L-aspartase-like"/>
    <property type="match status" value="1"/>
</dbReference>
<dbReference type="PROSITE" id="PS00163">
    <property type="entry name" value="FUMARATE_LYASES"/>
    <property type="match status" value="1"/>
</dbReference>